<evidence type="ECO:0000255" key="1">
    <source>
        <dbReference type="HAMAP-Rule" id="MF_01076"/>
    </source>
</evidence>
<sequence>MAVERVSTGIPGMDEVLNGGIPERNAVLLTGGPGTGKTIFSQQFIWAGLEEGEPGVFVTLEEHPVQVRKNVEGFGWNFREYEEEGLLAVVDAFTGGIGRASEYEKYVVKDPTDASELIGVIRQAVNDVEAKRVAIDSVTPLYIDKPSVARRIMFRLKRMLAGLGCTSILVNQIAAHERGFGGPGVEHAVDGIIRLDLDEVEGRLWRSLIVWKMRGTAHSMRRHPFEITDEGIRVDPEKVFVKERGEVREVED</sequence>
<comment type="similarity">
    <text evidence="1">Belongs to the UPF0273 family.</text>
</comment>
<proteinExistence type="inferred from homology"/>
<gene>
    <name type="ordered locus">MK0039</name>
</gene>
<feature type="chain" id="PRO_0000184586" description="UPF0273 protein MK0039">
    <location>
        <begin position="1"/>
        <end position="252"/>
    </location>
</feature>
<feature type="domain" description="KaiC" evidence="1">
    <location>
        <begin position="4"/>
        <end position="248"/>
    </location>
</feature>
<feature type="binding site" evidence="1">
    <location>
        <begin position="31"/>
        <end position="38"/>
    </location>
    <ligand>
        <name>ATP</name>
        <dbReference type="ChEBI" id="CHEBI:30616"/>
    </ligand>
</feature>
<keyword id="KW-0067">ATP-binding</keyword>
<keyword id="KW-0547">Nucleotide-binding</keyword>
<keyword id="KW-1185">Reference proteome</keyword>
<protein>
    <recommendedName>
        <fullName evidence="1">UPF0273 protein MK0039</fullName>
    </recommendedName>
</protein>
<name>Y039_METKA</name>
<organism>
    <name type="scientific">Methanopyrus kandleri (strain AV19 / DSM 6324 / JCM 9639 / NBRC 100938)</name>
    <dbReference type="NCBI Taxonomy" id="190192"/>
    <lineage>
        <taxon>Archaea</taxon>
        <taxon>Methanobacteriati</taxon>
        <taxon>Methanobacteriota</taxon>
        <taxon>Methanomada group</taxon>
        <taxon>Methanopyri</taxon>
        <taxon>Methanopyrales</taxon>
        <taxon>Methanopyraceae</taxon>
        <taxon>Methanopyrus</taxon>
    </lineage>
</organism>
<dbReference type="EMBL" id="AE009439">
    <property type="protein sequence ID" value="AAM01256.1"/>
    <property type="molecule type" value="Genomic_DNA"/>
</dbReference>
<dbReference type="RefSeq" id="WP_011018411.1">
    <property type="nucleotide sequence ID" value="NC_003551.1"/>
</dbReference>
<dbReference type="SMR" id="Q8TZ97"/>
<dbReference type="STRING" id="190192.MK0039"/>
<dbReference type="PaxDb" id="190192-MK0039"/>
<dbReference type="EnsemblBacteria" id="AAM01256">
    <property type="protein sequence ID" value="AAM01256"/>
    <property type="gene ID" value="MK0039"/>
</dbReference>
<dbReference type="GeneID" id="1477342"/>
<dbReference type="KEGG" id="mka:MK0039"/>
<dbReference type="PATRIC" id="fig|190192.8.peg.39"/>
<dbReference type="HOGENOM" id="CLU_023669_2_0_2"/>
<dbReference type="InParanoid" id="Q8TZ97"/>
<dbReference type="OrthoDB" id="27015at2157"/>
<dbReference type="Proteomes" id="UP000001826">
    <property type="component" value="Chromosome"/>
</dbReference>
<dbReference type="GO" id="GO:0005524">
    <property type="term" value="F:ATP binding"/>
    <property type="evidence" value="ECO:0007669"/>
    <property type="project" value="UniProtKB-UniRule"/>
</dbReference>
<dbReference type="Gene3D" id="3.40.50.300">
    <property type="entry name" value="P-loop containing nucleotide triphosphate hydrolases"/>
    <property type="match status" value="1"/>
</dbReference>
<dbReference type="HAMAP" id="MF_01076">
    <property type="entry name" value="UPF0273"/>
    <property type="match status" value="1"/>
</dbReference>
<dbReference type="InterPro" id="IPR014774">
    <property type="entry name" value="KaiC-like_dom"/>
</dbReference>
<dbReference type="InterPro" id="IPR010624">
    <property type="entry name" value="KaiC_dom"/>
</dbReference>
<dbReference type="InterPro" id="IPR027417">
    <property type="entry name" value="P-loop_NTPase"/>
</dbReference>
<dbReference type="InterPro" id="IPR022475">
    <property type="entry name" value="UPF0273_KaiC-like"/>
</dbReference>
<dbReference type="NCBIfam" id="TIGR03877">
    <property type="entry name" value="thermo_KaiC_1"/>
    <property type="match status" value="1"/>
</dbReference>
<dbReference type="PANTHER" id="PTHR43637">
    <property type="entry name" value="UPF0273 PROTEIN TM_0370"/>
    <property type="match status" value="1"/>
</dbReference>
<dbReference type="PANTHER" id="PTHR43637:SF1">
    <property type="entry name" value="UPF0273 PROTEIN TM_0370"/>
    <property type="match status" value="1"/>
</dbReference>
<dbReference type="Pfam" id="PF06745">
    <property type="entry name" value="ATPase"/>
    <property type="match status" value="1"/>
</dbReference>
<dbReference type="PRINTS" id="PR01874">
    <property type="entry name" value="DNAREPAIRADA"/>
</dbReference>
<dbReference type="SUPFAM" id="SSF52540">
    <property type="entry name" value="P-loop containing nucleoside triphosphate hydrolases"/>
    <property type="match status" value="1"/>
</dbReference>
<dbReference type="PROSITE" id="PS51146">
    <property type="entry name" value="KAIC"/>
    <property type="match status" value="1"/>
</dbReference>
<accession>Q8TZ97</accession>
<reference key="1">
    <citation type="journal article" date="2002" name="Proc. Natl. Acad. Sci. U.S.A.">
        <title>The complete genome of hyperthermophile Methanopyrus kandleri AV19 and monophyly of archaeal methanogens.</title>
        <authorList>
            <person name="Slesarev A.I."/>
            <person name="Mezhevaya K.V."/>
            <person name="Makarova K.S."/>
            <person name="Polushin N.N."/>
            <person name="Shcherbinina O.V."/>
            <person name="Shakhova V.V."/>
            <person name="Belova G.I."/>
            <person name="Aravind L."/>
            <person name="Natale D.A."/>
            <person name="Rogozin I.B."/>
            <person name="Tatusov R.L."/>
            <person name="Wolf Y.I."/>
            <person name="Stetter K.O."/>
            <person name="Malykh A.G."/>
            <person name="Koonin E.V."/>
            <person name="Kozyavkin S.A."/>
        </authorList>
    </citation>
    <scope>NUCLEOTIDE SEQUENCE [LARGE SCALE GENOMIC DNA]</scope>
    <source>
        <strain>AV19 / DSM 6324 / JCM 9639 / NBRC 100938</strain>
    </source>
</reference>